<dbReference type="EC" id="5.3.1.31" evidence="1"/>
<dbReference type="EMBL" id="PVNS01000006">
    <property type="protein sequence ID" value="PRO65851.1"/>
    <property type="molecule type" value="Genomic_DNA"/>
</dbReference>
<dbReference type="RefSeq" id="WP_105958947.1">
    <property type="nucleotide sequence ID" value="NZ_PVNS01000006.1"/>
</dbReference>
<dbReference type="SMR" id="A0A2P6MHU9"/>
<dbReference type="OrthoDB" id="5838738at2"/>
<dbReference type="BioCyc" id="MetaCyc:MONOMER-21941"/>
<dbReference type="Proteomes" id="UP000243650">
    <property type="component" value="Unassembled WGS sequence"/>
</dbReference>
<dbReference type="GO" id="GO:0005737">
    <property type="term" value="C:cytoplasm"/>
    <property type="evidence" value="ECO:0007669"/>
    <property type="project" value="InterPro"/>
</dbReference>
<dbReference type="GO" id="GO:0008736">
    <property type="term" value="F:L-fucose isomerase activity"/>
    <property type="evidence" value="ECO:0007669"/>
    <property type="project" value="InterPro"/>
</dbReference>
<dbReference type="GO" id="GO:0006004">
    <property type="term" value="P:fucose metabolic process"/>
    <property type="evidence" value="ECO:0007669"/>
    <property type="project" value="InterPro"/>
</dbReference>
<dbReference type="InterPro" id="IPR015888">
    <property type="entry name" value="Fuc_isomerase_C"/>
</dbReference>
<dbReference type="InterPro" id="IPR009015">
    <property type="entry name" value="Fucose_isomerase_N/cen_sf"/>
</dbReference>
<dbReference type="PANTHER" id="PTHR36120">
    <property type="entry name" value="FUCOSE ISOMERASE"/>
    <property type="match status" value="1"/>
</dbReference>
<dbReference type="PANTHER" id="PTHR36120:SF1">
    <property type="entry name" value="L-FUCOSE ISOMERASE C-TERMINAL DOMAIN-CONTAINING PROTEIN"/>
    <property type="match status" value="1"/>
</dbReference>
<dbReference type="Pfam" id="PF02952">
    <property type="entry name" value="Fucose_iso_C"/>
    <property type="match status" value="1"/>
</dbReference>
<dbReference type="SUPFAM" id="SSF53743">
    <property type="entry name" value="FucI/AraA N-terminal and middle domains"/>
    <property type="match status" value="1"/>
</dbReference>
<organism>
    <name type="scientific">Alkalicoccus urumqiensis</name>
    <name type="common">Bacillus urumqiensis</name>
    <dbReference type="NCBI Taxonomy" id="1548213"/>
    <lineage>
        <taxon>Bacteria</taxon>
        <taxon>Bacillati</taxon>
        <taxon>Bacillota</taxon>
        <taxon>Bacilli</taxon>
        <taxon>Bacillales</taxon>
        <taxon>Bacillaceae</taxon>
        <taxon>Alkalicoccus</taxon>
    </lineage>
</organism>
<sequence length="443" mass="49089">MLTVLYLPIARKTFNTDVADTLRQETEELLQETVELISPMELMTSPDDLDAFLQDVSSPPDAIVYQSLTFADGEFIQAAVDRYSIPVIVWSVREPEVGGRLQLNSLTGGNSTSHVLRSNSHPYSFLFGNPDEAAVQERLGSLFRVMDTVKQVKSLNIGVIGEHPPGFYFSGTDTGELHDVFGAKVTTVDLYDAFARAKDVPEERWLPEVETAEKQVLTLNRDDATVQRFAQFTSAMREYIAEENLSALAIRCWPDFFNELGAAACSTLSHLTEESMVSACESDIHGALSMFILNRLSAGRAPYLGDMVHVNEENNALVFWHCGAGAYSLAREATGAQPGVHPNRKLGFTMEFGLKAGEVTLFRVGHTPEGYRLLVFKGEALDVPQRFNGTTVEIGLKQPVHSVMQELMEEGFEPHYALVHADVTKEIREIGRLFNLPVVEIEA</sequence>
<reference key="1">
    <citation type="submission" date="2018-03" db="EMBL/GenBank/DDBJ databases">
        <title>Bacillus urumqiensis sp. nov., a moderately haloalkaliphilic bacterium isolated from a salt lake.</title>
        <authorList>
            <person name="Zhao B."/>
            <person name="Liao Z."/>
        </authorList>
    </citation>
    <scope>NUCLEOTIDE SEQUENCE [LARGE SCALE GENOMIC DNA]</scope>
    <source>
        <strain>DSM 29145 / JCM 30195 / BZ-SZ-XJ18</strain>
    </source>
</reference>
<reference key="2">
    <citation type="journal article" date="2021" name="ACS Catal.">
        <title>Mechanistically diverse pathways for sulfoquinovose degradation in bacteria.</title>
        <authorList>
            <person name="Liu J."/>
            <person name="Wei Y."/>
            <person name="Ma K."/>
            <person name="An J."/>
            <person name="Liu X."/>
            <person name="Liu Y."/>
            <person name="Ang E.L."/>
            <person name="Zhao H."/>
            <person name="Zhang Y."/>
        </authorList>
    </citation>
    <scope>FUNCTION</scope>
    <scope>CATALYTIC ACTIVITY</scope>
</reference>
<name>SQVD_ALKUR</name>
<evidence type="ECO:0000269" key="1">
    <source ref="2"/>
</evidence>
<evidence type="ECO:0000303" key="2">
    <source ref="2"/>
</evidence>
<evidence type="ECO:0000305" key="3"/>
<evidence type="ECO:0000312" key="4">
    <source>
        <dbReference type="EMBL" id="PRO65851.1"/>
    </source>
</evidence>
<gene>
    <name evidence="2" type="primary">sqvD</name>
    <name evidence="4" type="ORF">C6I21_08110</name>
</gene>
<proteinExistence type="evidence at protein level"/>
<keyword id="KW-0119">Carbohydrate metabolism</keyword>
<keyword id="KW-0413">Isomerase</keyword>
<keyword id="KW-1185">Reference proteome</keyword>
<comment type="function">
    <text evidence="1">Part of the sulfo-EMP2 pathway, a D-sulfoquinovose degradation pathway that produces sulfolactate (SL) (Ref.2). Catalyzes the isomerization of sulfoquinovose (SQ) to 6-deoxy-6-sulfo-D-fructose (SF) (Ref.2).</text>
</comment>
<comment type="catalytic activity">
    <reaction evidence="1">
        <text>6-sulfo-beta-D-quinovose = 6-deoxy-6-sulfo-D-fructose</text>
        <dbReference type="Rhea" id="RHEA:40439"/>
        <dbReference type="ChEBI" id="CHEBI:77133"/>
        <dbReference type="ChEBI" id="CHEBI:142957"/>
        <dbReference type="EC" id="5.3.1.31"/>
    </reaction>
    <physiologicalReaction direction="left-to-right" evidence="1">
        <dbReference type="Rhea" id="RHEA:40440"/>
    </physiologicalReaction>
</comment>
<comment type="similarity">
    <text evidence="3">Belongs to the SqvD family.</text>
</comment>
<protein>
    <recommendedName>
        <fullName evidence="2">Sulfoquinovose isomerase</fullName>
        <shortName evidence="2">SQ isomerase</shortName>
        <ecNumber evidence="1">5.3.1.31</ecNumber>
    </recommendedName>
</protein>
<feature type="chain" id="PRO_0000458933" description="Sulfoquinovose isomerase">
    <location>
        <begin position="1"/>
        <end position="443"/>
    </location>
</feature>
<accession>A0A2P6MHU9</accession>